<keyword id="KW-0328">Glycosyltransferase</keyword>
<keyword id="KW-0808">Transferase</keyword>
<gene>
    <name evidence="2" type="primary">deoD</name>
    <name type="ordered locus">VSAL_II0457</name>
</gene>
<evidence type="ECO:0000250" key="1">
    <source>
        <dbReference type="UniProtKB" id="P50389"/>
    </source>
</evidence>
<evidence type="ECO:0000255" key="2">
    <source>
        <dbReference type="HAMAP-Rule" id="MF_01627"/>
    </source>
</evidence>
<protein>
    <recommendedName>
        <fullName evidence="2">Purine nucleoside phosphorylase DeoD-type</fullName>
        <shortName evidence="2">PNP</shortName>
        <ecNumber evidence="2">2.4.2.1</ecNumber>
    </recommendedName>
</protein>
<proteinExistence type="inferred from homology"/>
<reference key="1">
    <citation type="journal article" date="2008" name="BMC Genomics">
        <title>The genome sequence of the fish pathogen Aliivibrio salmonicida strain LFI1238 shows extensive evidence of gene decay.</title>
        <authorList>
            <person name="Hjerde E."/>
            <person name="Lorentzen M.S."/>
            <person name="Holden M.T."/>
            <person name="Seeger K."/>
            <person name="Paulsen S."/>
            <person name="Bason N."/>
            <person name="Churcher C."/>
            <person name="Harris D."/>
            <person name="Norbertczak H."/>
            <person name="Quail M.A."/>
            <person name="Sanders S."/>
            <person name="Thurston S."/>
            <person name="Parkhill J."/>
            <person name="Willassen N.P."/>
            <person name="Thomson N.R."/>
        </authorList>
    </citation>
    <scope>NUCLEOTIDE SEQUENCE [LARGE SCALE GENOMIC DNA]</scope>
    <source>
        <strain>LFI1238</strain>
    </source>
</reference>
<name>DEOD_ALISL</name>
<feature type="chain" id="PRO_1000186169" description="Purine nucleoside phosphorylase DeoD-type">
    <location>
        <begin position="1"/>
        <end position="236"/>
    </location>
</feature>
<feature type="active site" description="Proton donor" evidence="2">
    <location>
        <position position="205"/>
    </location>
</feature>
<feature type="binding site" evidence="1">
    <location>
        <position position="5"/>
    </location>
    <ligand>
        <name>a purine D-ribonucleoside</name>
        <dbReference type="ChEBI" id="CHEBI:142355"/>
        <note>ligand shared between dimeric partners</note>
    </ligand>
</feature>
<feature type="binding site" description="in other chain" evidence="1">
    <location>
        <position position="21"/>
    </location>
    <ligand>
        <name>phosphate</name>
        <dbReference type="ChEBI" id="CHEBI:43474"/>
        <note>ligand shared between dimeric partners</note>
    </ligand>
</feature>
<feature type="binding site" description="in other chain" evidence="1">
    <location>
        <position position="25"/>
    </location>
    <ligand>
        <name>phosphate</name>
        <dbReference type="ChEBI" id="CHEBI:43474"/>
        <note>ligand shared between dimeric partners</note>
    </ligand>
</feature>
<feature type="binding site" evidence="1">
    <location>
        <position position="44"/>
    </location>
    <ligand>
        <name>phosphate</name>
        <dbReference type="ChEBI" id="CHEBI:43474"/>
        <note>ligand shared between dimeric partners</note>
    </ligand>
</feature>
<feature type="binding site" description="in other chain" evidence="1">
    <location>
        <begin position="88"/>
        <end position="91"/>
    </location>
    <ligand>
        <name>phosphate</name>
        <dbReference type="ChEBI" id="CHEBI:43474"/>
        <note>ligand shared between dimeric partners</note>
    </ligand>
</feature>
<feature type="binding site" description="in other chain" evidence="1">
    <location>
        <begin position="180"/>
        <end position="182"/>
    </location>
    <ligand>
        <name>a purine D-ribonucleoside</name>
        <dbReference type="ChEBI" id="CHEBI:142355"/>
        <note>ligand shared between dimeric partners</note>
    </ligand>
</feature>
<feature type="binding site" description="in other chain" evidence="1">
    <location>
        <begin position="204"/>
        <end position="205"/>
    </location>
    <ligand>
        <name>a purine D-ribonucleoside</name>
        <dbReference type="ChEBI" id="CHEBI:142355"/>
        <note>ligand shared between dimeric partners</note>
    </ligand>
</feature>
<feature type="site" description="Important for catalytic activity" evidence="2">
    <location>
        <position position="218"/>
    </location>
</feature>
<organism>
    <name type="scientific">Aliivibrio salmonicida (strain LFI1238)</name>
    <name type="common">Vibrio salmonicida (strain LFI1238)</name>
    <dbReference type="NCBI Taxonomy" id="316275"/>
    <lineage>
        <taxon>Bacteria</taxon>
        <taxon>Pseudomonadati</taxon>
        <taxon>Pseudomonadota</taxon>
        <taxon>Gammaproteobacteria</taxon>
        <taxon>Vibrionales</taxon>
        <taxon>Vibrionaceae</taxon>
        <taxon>Aliivibrio</taxon>
    </lineage>
</organism>
<sequence length="236" mass="25653">MATPHINAQVGDFAETVLMPGDPLRAKFIAENFLEDVTQVCDVRNMFGYTGTYKGKKVSVMGHGMGIPSCCIYVHELIAEFGVKNIIRVGSCGAVHDDVKLMDVVIGMGASTDSKVNRIRFNNHDFAAIADFGLLETAVAQARKLNVPVKVGNVFSADLFYSPETDLFDKMEKLGILGVDMEAAGIYRVAADLGAKALTILTVSDHIKRGEKLSSEDRQKSFNDMMTVALETAIKL</sequence>
<dbReference type="EC" id="2.4.2.1" evidence="2"/>
<dbReference type="EMBL" id="FM178380">
    <property type="protein sequence ID" value="CAQ81211.1"/>
    <property type="molecule type" value="Genomic_DNA"/>
</dbReference>
<dbReference type="RefSeq" id="WP_012551795.1">
    <property type="nucleotide sequence ID" value="NC_011313.1"/>
</dbReference>
<dbReference type="SMR" id="B6ER81"/>
<dbReference type="KEGG" id="vsa:VSAL_II0457"/>
<dbReference type="eggNOG" id="COG0813">
    <property type="taxonomic scope" value="Bacteria"/>
</dbReference>
<dbReference type="HOGENOM" id="CLU_068457_2_0_6"/>
<dbReference type="Proteomes" id="UP000001730">
    <property type="component" value="Chromosome 2"/>
</dbReference>
<dbReference type="GO" id="GO:0005829">
    <property type="term" value="C:cytosol"/>
    <property type="evidence" value="ECO:0007669"/>
    <property type="project" value="TreeGrafter"/>
</dbReference>
<dbReference type="GO" id="GO:0004731">
    <property type="term" value="F:purine-nucleoside phosphorylase activity"/>
    <property type="evidence" value="ECO:0007669"/>
    <property type="project" value="UniProtKB-UniRule"/>
</dbReference>
<dbReference type="GO" id="GO:0006152">
    <property type="term" value="P:purine nucleoside catabolic process"/>
    <property type="evidence" value="ECO:0007669"/>
    <property type="project" value="TreeGrafter"/>
</dbReference>
<dbReference type="CDD" id="cd09006">
    <property type="entry name" value="PNP_EcPNPI-like"/>
    <property type="match status" value="1"/>
</dbReference>
<dbReference type="Gene3D" id="3.40.50.1580">
    <property type="entry name" value="Nucleoside phosphorylase domain"/>
    <property type="match status" value="1"/>
</dbReference>
<dbReference type="HAMAP" id="MF_01627">
    <property type="entry name" value="Pur_nucleosid_phosp"/>
    <property type="match status" value="1"/>
</dbReference>
<dbReference type="InterPro" id="IPR004402">
    <property type="entry name" value="DeoD-type"/>
</dbReference>
<dbReference type="InterPro" id="IPR000845">
    <property type="entry name" value="Nucleoside_phosphorylase_d"/>
</dbReference>
<dbReference type="InterPro" id="IPR035994">
    <property type="entry name" value="Nucleoside_phosphorylase_sf"/>
</dbReference>
<dbReference type="NCBIfam" id="TIGR00107">
    <property type="entry name" value="deoD"/>
    <property type="match status" value="1"/>
</dbReference>
<dbReference type="NCBIfam" id="NF004489">
    <property type="entry name" value="PRK05819.1"/>
    <property type="match status" value="1"/>
</dbReference>
<dbReference type="NCBIfam" id="NF009914">
    <property type="entry name" value="PRK13374.1"/>
    <property type="match status" value="1"/>
</dbReference>
<dbReference type="PANTHER" id="PTHR43691:SF11">
    <property type="entry name" value="FI09636P-RELATED"/>
    <property type="match status" value="1"/>
</dbReference>
<dbReference type="PANTHER" id="PTHR43691">
    <property type="entry name" value="URIDINE PHOSPHORYLASE"/>
    <property type="match status" value="1"/>
</dbReference>
<dbReference type="Pfam" id="PF01048">
    <property type="entry name" value="PNP_UDP_1"/>
    <property type="match status" value="1"/>
</dbReference>
<dbReference type="SUPFAM" id="SSF53167">
    <property type="entry name" value="Purine and uridine phosphorylases"/>
    <property type="match status" value="1"/>
</dbReference>
<accession>B6ER81</accession>
<comment type="function">
    <text evidence="2">Catalyzes the reversible phosphorolytic breakdown of the N-glycosidic bond in the beta-(deoxy)ribonucleoside molecules, with the formation of the corresponding free purine bases and pentose-1-phosphate.</text>
</comment>
<comment type="catalytic activity">
    <reaction evidence="2">
        <text>a purine D-ribonucleoside + phosphate = a purine nucleobase + alpha-D-ribose 1-phosphate</text>
        <dbReference type="Rhea" id="RHEA:19805"/>
        <dbReference type="ChEBI" id="CHEBI:26386"/>
        <dbReference type="ChEBI" id="CHEBI:43474"/>
        <dbReference type="ChEBI" id="CHEBI:57720"/>
        <dbReference type="ChEBI" id="CHEBI:142355"/>
        <dbReference type="EC" id="2.4.2.1"/>
    </reaction>
</comment>
<comment type="catalytic activity">
    <reaction evidence="2">
        <text>a purine 2'-deoxy-D-ribonucleoside + phosphate = a purine nucleobase + 2-deoxy-alpha-D-ribose 1-phosphate</text>
        <dbReference type="Rhea" id="RHEA:36431"/>
        <dbReference type="ChEBI" id="CHEBI:26386"/>
        <dbReference type="ChEBI" id="CHEBI:43474"/>
        <dbReference type="ChEBI" id="CHEBI:57259"/>
        <dbReference type="ChEBI" id="CHEBI:142361"/>
        <dbReference type="EC" id="2.4.2.1"/>
    </reaction>
</comment>
<comment type="subunit">
    <text evidence="2">Homohexamer; trimer of homodimers.</text>
</comment>
<comment type="similarity">
    <text evidence="2">Belongs to the PNP/UDP phosphorylase family.</text>
</comment>